<evidence type="ECO:0000250" key="1"/>
<evidence type="ECO:0000255" key="2">
    <source>
        <dbReference type="PROSITE-ProRule" id="PRU00198"/>
    </source>
</evidence>
<evidence type="ECO:0000305" key="3"/>
<feature type="chain" id="PRO_0000194195" description="Anti-sigma-B factor antagonist">
    <location>
        <begin position="1"/>
        <end position="108"/>
    </location>
</feature>
<feature type="domain" description="STAS" evidence="2">
    <location>
        <begin position="3"/>
        <end position="108"/>
    </location>
</feature>
<feature type="modified residue" description="Phosphoserine" evidence="1">
    <location>
        <position position="57"/>
    </location>
</feature>
<reference key="1">
    <citation type="journal article" date="2001" name="Infect. Immun.">
        <title>Identification of the sigB operon in Staphylococcus epidermidis: construction and characterization of a sigB deletion mutant.</title>
        <authorList>
            <person name="Kies S."/>
            <person name="Otto M."/>
            <person name="Vuong C."/>
            <person name="Gotz F."/>
        </authorList>
    </citation>
    <scope>NUCLEOTIDE SEQUENCE [GENOMIC DNA]</scope>
</reference>
<keyword id="KW-0597">Phosphoprotein</keyword>
<dbReference type="EMBL" id="AF359562">
    <property type="protein sequence ID" value="AAL37941.1"/>
    <property type="molecule type" value="Genomic_DNA"/>
</dbReference>
<dbReference type="RefSeq" id="WP_001829952.1">
    <property type="nucleotide sequence ID" value="NZ_WLUZ01000001.1"/>
</dbReference>
<dbReference type="SMR" id="P0C0Q7"/>
<dbReference type="OMA" id="MNLAINI"/>
<dbReference type="OrthoDB" id="9793697at2"/>
<dbReference type="GO" id="GO:0043856">
    <property type="term" value="F:anti-sigma factor antagonist activity"/>
    <property type="evidence" value="ECO:0007669"/>
    <property type="project" value="InterPro"/>
</dbReference>
<dbReference type="CDD" id="cd07043">
    <property type="entry name" value="STAS_anti-anti-sigma_factors"/>
    <property type="match status" value="1"/>
</dbReference>
<dbReference type="FunFam" id="3.30.750.24:FF:000001">
    <property type="entry name" value="Anti-sigma factor antagonist"/>
    <property type="match status" value="1"/>
</dbReference>
<dbReference type="Gene3D" id="3.30.750.24">
    <property type="entry name" value="STAS domain"/>
    <property type="match status" value="1"/>
</dbReference>
<dbReference type="InterPro" id="IPR003658">
    <property type="entry name" value="Anti-sigma_ant"/>
</dbReference>
<dbReference type="InterPro" id="IPR002645">
    <property type="entry name" value="STAS_dom"/>
</dbReference>
<dbReference type="InterPro" id="IPR036513">
    <property type="entry name" value="STAS_dom_sf"/>
</dbReference>
<dbReference type="NCBIfam" id="TIGR00377">
    <property type="entry name" value="ant_ant_sig"/>
    <property type="match status" value="1"/>
</dbReference>
<dbReference type="PANTHER" id="PTHR33495">
    <property type="entry name" value="ANTI-SIGMA FACTOR ANTAGONIST TM_1081-RELATED-RELATED"/>
    <property type="match status" value="1"/>
</dbReference>
<dbReference type="PANTHER" id="PTHR33495:SF9">
    <property type="entry name" value="ANTI-SIGMA-B FACTOR ANTAGONIST"/>
    <property type="match status" value="1"/>
</dbReference>
<dbReference type="Pfam" id="PF01740">
    <property type="entry name" value="STAS"/>
    <property type="match status" value="1"/>
</dbReference>
<dbReference type="SUPFAM" id="SSF52091">
    <property type="entry name" value="SpoIIaa-like"/>
    <property type="match status" value="1"/>
</dbReference>
<dbReference type="PROSITE" id="PS50801">
    <property type="entry name" value="STAS"/>
    <property type="match status" value="1"/>
</dbReference>
<protein>
    <recommendedName>
        <fullName>Anti-sigma-B factor antagonist</fullName>
    </recommendedName>
    <alternativeName>
        <fullName>Anti-anti-sigma-B factor</fullName>
    </alternativeName>
</protein>
<comment type="function">
    <text evidence="1">Positive regulator of sigma-B activity. Non-phosphorylated RsbV binds to RsbW, preventing its association with sigma-B. When phosphorylated, releases RsbW, which is then free to complex with and inactivate sigma-B (By similarity).</text>
</comment>
<comment type="PTM">
    <text evidence="1">Phosphorylated by RsbW on a serine residue.</text>
</comment>
<comment type="similarity">
    <text evidence="3">Belongs to the anti-sigma-factor antagonist family.</text>
</comment>
<organism>
    <name type="scientific">Staphylococcus epidermidis</name>
    <dbReference type="NCBI Taxonomy" id="1282"/>
    <lineage>
        <taxon>Bacteria</taxon>
        <taxon>Bacillati</taxon>
        <taxon>Bacillota</taxon>
        <taxon>Bacilli</taxon>
        <taxon>Bacillales</taxon>
        <taxon>Staphylococcaceae</taxon>
        <taxon>Staphylococcus</taxon>
    </lineage>
</organism>
<name>RSBV_STAEP</name>
<accession>P0C0Q7</accession>
<accession>Q8VSV6</accession>
<sequence length="108" mass="12093">MNLNIETITHDDFYEVKVGGELDVYTVPELEEVLVPMRQEGTHDVHVNLANVSYMDSTGLGLFVGTLKALNQNDKNLYILGVSERIGRLFDITGLKDLMHVNEGTEVE</sequence>
<proteinExistence type="inferred from homology"/>
<gene>
    <name type="primary">rsbV</name>
</gene>